<organism>
    <name type="scientific">Borreliella burgdorferi (strain ATCC 35210 / DSM 4680 / CIP 102532 / B31)</name>
    <name type="common">Borrelia burgdorferi</name>
    <dbReference type="NCBI Taxonomy" id="224326"/>
    <lineage>
        <taxon>Bacteria</taxon>
        <taxon>Pseudomonadati</taxon>
        <taxon>Spirochaetota</taxon>
        <taxon>Spirochaetia</taxon>
        <taxon>Spirochaetales</taxon>
        <taxon>Borreliaceae</taxon>
        <taxon>Borreliella</taxon>
    </lineage>
</organism>
<evidence type="ECO:0000255" key="1">
    <source>
        <dbReference type="HAMAP-Rule" id="MF_00083"/>
    </source>
</evidence>
<proteinExistence type="inferred from homology"/>
<dbReference type="EC" id="3.1.1.29" evidence="1"/>
<dbReference type="EMBL" id="L32144">
    <property type="protein sequence ID" value="AAC41525.1"/>
    <property type="molecule type" value="Genomic_DNA"/>
</dbReference>
<dbReference type="EMBL" id="AE000783">
    <property type="protein sequence ID" value="AAC67122.1"/>
    <property type="molecule type" value="Genomic_DNA"/>
</dbReference>
<dbReference type="PIR" id="B70198">
    <property type="entry name" value="B70198"/>
</dbReference>
<dbReference type="RefSeq" id="NP_212921.1">
    <property type="nucleotide sequence ID" value="NC_001318.1"/>
</dbReference>
<dbReference type="RefSeq" id="WP_002660982.1">
    <property type="nucleotide sequence ID" value="NC_001318.1"/>
</dbReference>
<dbReference type="SMR" id="P47714"/>
<dbReference type="STRING" id="224326.BB_0787"/>
<dbReference type="PaxDb" id="224326-BB_0787"/>
<dbReference type="EnsemblBacteria" id="AAC67122">
    <property type="protein sequence ID" value="AAC67122"/>
    <property type="gene ID" value="BB_0787"/>
</dbReference>
<dbReference type="KEGG" id="bbu:BB_0787"/>
<dbReference type="PATRIC" id="fig|224326.49.peg.1179"/>
<dbReference type="HOGENOM" id="CLU_062456_4_1_12"/>
<dbReference type="OrthoDB" id="9800507at2"/>
<dbReference type="Proteomes" id="UP000001807">
    <property type="component" value="Chromosome"/>
</dbReference>
<dbReference type="GO" id="GO:0005737">
    <property type="term" value="C:cytoplasm"/>
    <property type="evidence" value="ECO:0007669"/>
    <property type="project" value="UniProtKB-SubCell"/>
</dbReference>
<dbReference type="GO" id="GO:0004045">
    <property type="term" value="F:peptidyl-tRNA hydrolase activity"/>
    <property type="evidence" value="ECO:0007669"/>
    <property type="project" value="UniProtKB-UniRule"/>
</dbReference>
<dbReference type="GO" id="GO:0000049">
    <property type="term" value="F:tRNA binding"/>
    <property type="evidence" value="ECO:0007669"/>
    <property type="project" value="UniProtKB-UniRule"/>
</dbReference>
<dbReference type="GO" id="GO:0006515">
    <property type="term" value="P:protein quality control for misfolded or incompletely synthesized proteins"/>
    <property type="evidence" value="ECO:0007669"/>
    <property type="project" value="UniProtKB-UniRule"/>
</dbReference>
<dbReference type="GO" id="GO:0072344">
    <property type="term" value="P:rescue of stalled ribosome"/>
    <property type="evidence" value="ECO:0007669"/>
    <property type="project" value="UniProtKB-UniRule"/>
</dbReference>
<dbReference type="CDD" id="cd00462">
    <property type="entry name" value="PTH"/>
    <property type="match status" value="1"/>
</dbReference>
<dbReference type="Gene3D" id="3.40.50.1470">
    <property type="entry name" value="Peptidyl-tRNA hydrolase"/>
    <property type="match status" value="1"/>
</dbReference>
<dbReference type="HAMAP" id="MF_00083">
    <property type="entry name" value="Pept_tRNA_hydro_bact"/>
    <property type="match status" value="1"/>
</dbReference>
<dbReference type="InterPro" id="IPR001328">
    <property type="entry name" value="Pept_tRNA_hydro"/>
</dbReference>
<dbReference type="InterPro" id="IPR018171">
    <property type="entry name" value="Pept_tRNA_hydro_CS"/>
</dbReference>
<dbReference type="InterPro" id="IPR036416">
    <property type="entry name" value="Pept_tRNA_hydro_sf"/>
</dbReference>
<dbReference type="NCBIfam" id="TIGR00447">
    <property type="entry name" value="pth"/>
    <property type="match status" value="1"/>
</dbReference>
<dbReference type="PANTHER" id="PTHR17224">
    <property type="entry name" value="PEPTIDYL-TRNA HYDROLASE"/>
    <property type="match status" value="1"/>
</dbReference>
<dbReference type="PANTHER" id="PTHR17224:SF1">
    <property type="entry name" value="PEPTIDYL-TRNA HYDROLASE"/>
    <property type="match status" value="1"/>
</dbReference>
<dbReference type="Pfam" id="PF01195">
    <property type="entry name" value="Pept_tRNA_hydro"/>
    <property type="match status" value="1"/>
</dbReference>
<dbReference type="SUPFAM" id="SSF53178">
    <property type="entry name" value="Peptidyl-tRNA hydrolase-like"/>
    <property type="match status" value="1"/>
</dbReference>
<dbReference type="PROSITE" id="PS01195">
    <property type="entry name" value="PEPT_TRNA_HYDROL_1"/>
    <property type="match status" value="1"/>
</dbReference>
<dbReference type="PROSITE" id="PS01196">
    <property type="entry name" value="PEPT_TRNA_HYDROL_2"/>
    <property type="match status" value="1"/>
</dbReference>
<feature type="chain" id="PRO_0000187699" description="Peptidyl-tRNA hydrolase">
    <location>
        <begin position="1"/>
        <end position="188"/>
    </location>
</feature>
<feature type="active site" description="Proton acceptor" evidence="1">
    <location>
        <position position="20"/>
    </location>
</feature>
<feature type="binding site" evidence="1">
    <location>
        <position position="15"/>
    </location>
    <ligand>
        <name>tRNA</name>
        <dbReference type="ChEBI" id="CHEBI:17843"/>
    </ligand>
</feature>
<feature type="binding site" evidence="1">
    <location>
        <position position="64"/>
    </location>
    <ligand>
        <name>tRNA</name>
        <dbReference type="ChEBI" id="CHEBI:17843"/>
    </ligand>
</feature>
<feature type="binding site" evidence="1">
    <location>
        <position position="66"/>
    </location>
    <ligand>
        <name>tRNA</name>
        <dbReference type="ChEBI" id="CHEBI:17843"/>
    </ligand>
</feature>
<feature type="binding site" evidence="1">
    <location>
        <position position="112"/>
    </location>
    <ligand>
        <name>tRNA</name>
        <dbReference type="ChEBI" id="CHEBI:17843"/>
    </ligand>
</feature>
<feature type="site" description="Discriminates between blocked and unblocked aminoacyl-tRNA" evidence="1">
    <location>
        <position position="10"/>
    </location>
</feature>
<feature type="site" description="Stabilizes the basic form of H active site to accept a proton" evidence="1">
    <location>
        <position position="91"/>
    </location>
</feature>
<sequence length="188" mass="21250">MGLLILGLGNPGLEFSLTRHNVGFSLLDKIVSKNGLFLKRKKKYEYSELKMISGRVILVKPLTYMNLSGSLFPSIFSDFYMCIKNLLVVLDNVDLPLGKCRLKERGGVSTHNGLRSISSVLGSSNYSRLYIGVGSNLMRDIKSFVLSRFCKDEMDRLEKLYDFLSDELIDISEANFKNKVQKINSSNF</sequence>
<accession>P47714</accession>
<gene>
    <name evidence="1" type="primary">pth</name>
    <name type="ordered locus">BB_0787</name>
</gene>
<reference key="1">
    <citation type="journal article" date="1996" name="Gene">
        <title>Microbial genes homologous to the peptidyl-tRNA hydrolase-encoding gene of Escherichia coli.</title>
        <authorList>
            <person name="de la Vega F.M."/>
            <person name="Galindo J.M."/>
            <person name="Old I.G."/>
            <person name="Guarneros G."/>
        </authorList>
    </citation>
    <scope>NUCLEOTIDE SEQUENCE [GENOMIC DNA]</scope>
    <source>
        <strain>212</strain>
    </source>
</reference>
<reference key="2">
    <citation type="journal article" date="1997" name="Nature">
        <title>Genomic sequence of a Lyme disease spirochaete, Borrelia burgdorferi.</title>
        <authorList>
            <person name="Fraser C.M."/>
            <person name="Casjens S."/>
            <person name="Huang W.M."/>
            <person name="Sutton G.G."/>
            <person name="Clayton R.A."/>
            <person name="Lathigra R."/>
            <person name="White O."/>
            <person name="Ketchum K.A."/>
            <person name="Dodson R.J."/>
            <person name="Hickey E.K."/>
            <person name="Gwinn M.L."/>
            <person name="Dougherty B.A."/>
            <person name="Tomb J.-F."/>
            <person name="Fleischmann R.D."/>
            <person name="Richardson D.L."/>
            <person name="Peterson J.D."/>
            <person name="Kerlavage A.R."/>
            <person name="Quackenbush J."/>
            <person name="Salzberg S.L."/>
            <person name="Hanson M."/>
            <person name="van Vugt R."/>
            <person name="Palmer N."/>
            <person name="Adams M.D."/>
            <person name="Gocayne J.D."/>
            <person name="Weidman J.F."/>
            <person name="Utterback T.R."/>
            <person name="Watthey L."/>
            <person name="McDonald L.A."/>
            <person name="Artiach P."/>
            <person name="Bowman C."/>
            <person name="Garland S.A."/>
            <person name="Fujii C."/>
            <person name="Cotton M.D."/>
            <person name="Horst K."/>
            <person name="Roberts K.M."/>
            <person name="Hatch B."/>
            <person name="Smith H.O."/>
            <person name="Venter J.C."/>
        </authorList>
    </citation>
    <scope>NUCLEOTIDE SEQUENCE [LARGE SCALE GENOMIC DNA]</scope>
    <source>
        <strain>ATCC 35210 / DSM 4680 / CIP 102532 / B31</strain>
    </source>
</reference>
<keyword id="KW-0963">Cytoplasm</keyword>
<keyword id="KW-0378">Hydrolase</keyword>
<keyword id="KW-1185">Reference proteome</keyword>
<keyword id="KW-0694">RNA-binding</keyword>
<keyword id="KW-0820">tRNA-binding</keyword>
<comment type="function">
    <text evidence="1">Hydrolyzes ribosome-free peptidyl-tRNAs (with 1 or more amino acids incorporated), which drop off the ribosome during protein synthesis, or as a result of ribosome stalling.</text>
</comment>
<comment type="function">
    <text evidence="1">Catalyzes the release of premature peptidyl moieties from peptidyl-tRNA molecules trapped in stalled 50S ribosomal subunits, and thus maintains levels of free tRNAs and 50S ribosomes.</text>
</comment>
<comment type="catalytic activity">
    <reaction evidence="1">
        <text>an N-acyl-L-alpha-aminoacyl-tRNA + H2O = an N-acyl-L-amino acid + a tRNA + H(+)</text>
        <dbReference type="Rhea" id="RHEA:54448"/>
        <dbReference type="Rhea" id="RHEA-COMP:10123"/>
        <dbReference type="Rhea" id="RHEA-COMP:13883"/>
        <dbReference type="ChEBI" id="CHEBI:15377"/>
        <dbReference type="ChEBI" id="CHEBI:15378"/>
        <dbReference type="ChEBI" id="CHEBI:59874"/>
        <dbReference type="ChEBI" id="CHEBI:78442"/>
        <dbReference type="ChEBI" id="CHEBI:138191"/>
        <dbReference type="EC" id="3.1.1.29"/>
    </reaction>
</comment>
<comment type="subunit">
    <text evidence="1">Monomer.</text>
</comment>
<comment type="subcellular location">
    <subcellularLocation>
        <location evidence="1">Cytoplasm</location>
    </subcellularLocation>
</comment>
<comment type="similarity">
    <text evidence="1">Belongs to the PTH family.</text>
</comment>
<name>PTH_BORBU</name>
<protein>
    <recommendedName>
        <fullName evidence="1">Peptidyl-tRNA hydrolase</fullName>
        <shortName evidence="1">Pth</shortName>
        <ecNumber evidence="1">3.1.1.29</ecNumber>
    </recommendedName>
</protein>